<sequence length="451" mass="51217">MNYEVYCGNAHAEPNSSAVQQLAEACVEQDASYFDGCSRTCVKDKYLLPLTQFDNLEIVVYGQIFPILVLFAVFANAAVALVLSKKHMITPTNVVLKYMAIAELLVGLVPLPWTLFFFSMGNIKETHRLELWWCYLQKYSMDAFPPVFHMIAMWLTVLLAAQRYVSISHPLHSRSACNVKNVRLATMIITVTSFLCGLPKSFDYEYETVHGWIYSHGNWTYASSCVMMPTAILTNMGQTVYFNIYFWTRALGFIILPSFLLVLLNGLLIKGIRRAQRRKLRLLREKRSEEAARQRDSNSTSLMLVAIVSIFLIVNLPQAIFMGLLCVCETFTIKIPILEGTFPAVFLIASNMIVIATYPINFGIYCFMSSSFRQTFKLLFCPGASQLQCERRIEAASAVHSSRRRSDICSHLVNVCTNSEGFMQVSHHCLHVDYLVSDRQSTQFTTMDRSD</sequence>
<keyword id="KW-0085">Behavior</keyword>
<keyword id="KW-1003">Cell membrane</keyword>
<keyword id="KW-0145">Chemotaxis</keyword>
<keyword id="KW-1015">Disulfide bond</keyword>
<keyword id="KW-0297">G-protein coupled receptor</keyword>
<keyword id="KW-0325">Glycoprotein</keyword>
<keyword id="KW-0472">Membrane</keyword>
<keyword id="KW-0675">Receptor</keyword>
<keyword id="KW-1185">Reference proteome</keyword>
<keyword id="KW-0807">Transducer</keyword>
<keyword id="KW-0812">Transmembrane</keyword>
<keyword id="KW-1133">Transmembrane helix</keyword>
<evidence type="ECO:0000255" key="1"/>
<evidence type="ECO:0000255" key="2">
    <source>
        <dbReference type="PROSITE-ProRule" id="PRU00498"/>
    </source>
</evidence>
<evidence type="ECO:0000255" key="3">
    <source>
        <dbReference type="PROSITE-ProRule" id="PRU00521"/>
    </source>
</evidence>
<evidence type="ECO:0000269" key="4">
    <source>
    </source>
</evidence>
<evidence type="ECO:0000303" key="5">
    <source>
    </source>
</evidence>
<evidence type="ECO:0000305" key="6"/>
<evidence type="ECO:0000312" key="7">
    <source>
        <dbReference type="Proteomes" id="UP000001940"/>
    </source>
</evidence>
<evidence type="ECO:0000312" key="8">
    <source>
        <dbReference type="WormBase" id="F42D1.3"/>
    </source>
</evidence>
<name>SPRR2_CAEEL</name>
<dbReference type="EMBL" id="BX284606">
    <property type="protein sequence ID" value="CAB03091.2"/>
    <property type="molecule type" value="Genomic_DNA"/>
</dbReference>
<dbReference type="PIR" id="T22088">
    <property type="entry name" value="T22088"/>
</dbReference>
<dbReference type="RefSeq" id="NP_510455.2">
    <property type="nucleotide sequence ID" value="NM_078054.5"/>
</dbReference>
<dbReference type="SMR" id="Q93704"/>
<dbReference type="STRING" id="6239.F42D1.3.2"/>
<dbReference type="GlyCosmos" id="Q93704">
    <property type="glycosylation" value="2 sites, No reported glycans"/>
</dbReference>
<dbReference type="PaxDb" id="6239-F42D1.3"/>
<dbReference type="EnsemblMetazoa" id="F42D1.3.1">
    <property type="protein sequence ID" value="F42D1.3.1"/>
    <property type="gene ID" value="WBGene00009629"/>
</dbReference>
<dbReference type="EnsemblMetazoa" id="F42D1.3.2">
    <property type="protein sequence ID" value="F42D1.3.2"/>
    <property type="gene ID" value="WBGene00009629"/>
</dbReference>
<dbReference type="EnsemblMetazoa" id="F42D1.3.3">
    <property type="protein sequence ID" value="F42D1.3.3"/>
    <property type="gene ID" value="WBGene00009629"/>
</dbReference>
<dbReference type="GeneID" id="181575"/>
<dbReference type="KEGG" id="cel:CELE_F42D1.3"/>
<dbReference type="UCSC" id="F42D1.3">
    <property type="organism name" value="c. elegans"/>
</dbReference>
<dbReference type="AGR" id="WB:WBGene00009629"/>
<dbReference type="CTD" id="181575"/>
<dbReference type="WormBase" id="F42D1.3">
    <property type="protein sequence ID" value="CE31511"/>
    <property type="gene ID" value="WBGene00009629"/>
    <property type="gene designation" value="sprr-2"/>
</dbReference>
<dbReference type="eggNOG" id="ENOG502QVMK">
    <property type="taxonomic scope" value="Eukaryota"/>
</dbReference>
<dbReference type="HOGENOM" id="CLU_009579_24_5_1"/>
<dbReference type="InParanoid" id="Q93704"/>
<dbReference type="OMA" id="HLETAMW"/>
<dbReference type="OrthoDB" id="5962323at2759"/>
<dbReference type="PhylomeDB" id="Q93704"/>
<dbReference type="PRO" id="PR:Q93704"/>
<dbReference type="Proteomes" id="UP000001940">
    <property type="component" value="Chromosome X"/>
</dbReference>
<dbReference type="Bgee" id="WBGene00009629">
    <property type="expression patterns" value="Expressed in larva and 3 other cell types or tissues"/>
</dbReference>
<dbReference type="GO" id="GO:0005886">
    <property type="term" value="C:plasma membrane"/>
    <property type="evidence" value="ECO:0000318"/>
    <property type="project" value="GO_Central"/>
</dbReference>
<dbReference type="GO" id="GO:0008528">
    <property type="term" value="F:G protein-coupled peptide receptor activity"/>
    <property type="evidence" value="ECO:0000318"/>
    <property type="project" value="GO_Central"/>
</dbReference>
<dbReference type="GO" id="GO:0006935">
    <property type="term" value="P:chemotaxis"/>
    <property type="evidence" value="ECO:0007669"/>
    <property type="project" value="UniProtKB-KW"/>
</dbReference>
<dbReference type="GO" id="GO:0007186">
    <property type="term" value="P:G protein-coupled receptor signaling pathway"/>
    <property type="evidence" value="ECO:0000318"/>
    <property type="project" value="GO_Central"/>
</dbReference>
<dbReference type="CDD" id="cd14978">
    <property type="entry name" value="7tmA_FMRFamide_R-like"/>
    <property type="match status" value="1"/>
</dbReference>
<dbReference type="Gene3D" id="1.20.1070.10">
    <property type="entry name" value="Rhodopsin 7-helix transmembrane proteins"/>
    <property type="match status" value="1"/>
</dbReference>
<dbReference type="InterPro" id="IPR019427">
    <property type="entry name" value="7TM_GPCR_serpentine_rcpt_Srw"/>
</dbReference>
<dbReference type="InterPro" id="IPR053071">
    <property type="entry name" value="GPCR1-related_rcpt"/>
</dbReference>
<dbReference type="InterPro" id="IPR000276">
    <property type="entry name" value="GPCR_Rhodpsn"/>
</dbReference>
<dbReference type="InterPro" id="IPR017452">
    <property type="entry name" value="GPCR_Rhodpsn_7TM"/>
</dbReference>
<dbReference type="PANTHER" id="PTHR47023">
    <property type="entry name" value="SEX PEPTIDE RECEPTOR"/>
    <property type="match status" value="1"/>
</dbReference>
<dbReference type="PANTHER" id="PTHR47023:SF5">
    <property type="entry name" value="SEX PEPTIDE RECEPTOR-RELATED PROTEIN 2"/>
    <property type="match status" value="1"/>
</dbReference>
<dbReference type="Pfam" id="PF10324">
    <property type="entry name" value="7TM_GPCR_Srw"/>
    <property type="match status" value="1"/>
</dbReference>
<dbReference type="PRINTS" id="PR00237">
    <property type="entry name" value="GPCRRHODOPSN"/>
</dbReference>
<dbReference type="SUPFAM" id="SSF81321">
    <property type="entry name" value="Family A G protein-coupled receptor-like"/>
    <property type="match status" value="1"/>
</dbReference>
<dbReference type="PROSITE" id="PS50262">
    <property type="entry name" value="G_PROTEIN_RECEP_F1_2"/>
    <property type="match status" value="1"/>
</dbReference>
<comment type="function">
    <text evidence="4">G-protein coupled receptor for the neuropeptide like protein nlp-38 (PubMed:30779740). Plays a role in several types of aversive gustatory associative learning including gustatory plasticity and salt avoidance learning (PubMed:30779740). Its role in salt avoidance learning may be through activation of the transcription factor crh-1/CREB and de novo transcription and translation, which in turn promotes the formation of long-term memory (PubMed:30779740).</text>
</comment>
<comment type="subcellular location">
    <subcellularLocation>
        <location evidence="6">Cell membrane</location>
        <topology evidence="1">Multi-pass membrane protein</topology>
    </subcellularLocation>
</comment>
<comment type="tissue specificity">
    <text evidence="4">Expressed in head neurons including the ASE sensory neurons and the ASI and AWB chemosensory neurons, the midbody neurons SDQ, and motor neurons in the tail.</text>
</comment>
<comment type="similarity">
    <text evidence="3">Belongs to the G-protein coupled receptor 1 family.</text>
</comment>
<gene>
    <name evidence="8" type="primary">sprr-2</name>
    <name evidence="5" type="synonym">mipr-1</name>
    <name evidence="8" type="ORF">F42D1.3</name>
</gene>
<reference evidence="7" key="1">
    <citation type="journal article" date="1998" name="Science">
        <title>Genome sequence of the nematode C. elegans: a platform for investigating biology.</title>
        <authorList>
            <consortium name="The C. elegans sequencing consortium"/>
        </authorList>
    </citation>
    <scope>NUCLEOTIDE SEQUENCE [LARGE SCALE GENOMIC DNA]</scope>
    <source>
        <strain evidence="7">Bristol N2</strain>
    </source>
</reference>
<reference evidence="6" key="2">
    <citation type="journal article" date="2019" name="PLoS Genet.">
        <title>Myoinhibitory peptide signaling modulates aversive gustatory learning in Caenorhabditis elegans.</title>
        <authorList>
            <person name="Peymen K."/>
            <person name="Watteyne J."/>
            <person name="Borghgraef C."/>
            <person name="Van Sinay E."/>
            <person name="Beets I."/>
            <person name="Schoofs L."/>
        </authorList>
    </citation>
    <scope>FUNCTION</scope>
    <scope>TISSUE SPECIFICITY</scope>
</reference>
<proteinExistence type="evidence at transcript level"/>
<protein>
    <recommendedName>
        <fullName evidence="8">Sex peptide receptor-related protein 2</fullName>
    </recommendedName>
    <alternativeName>
        <fullName evidence="5">Myoinhibitory-like protein receptor homolog</fullName>
    </alternativeName>
</protein>
<feature type="chain" id="PRO_0000448956" description="Sex peptide receptor-related protein 2">
    <location>
        <begin position="1"/>
        <end position="451"/>
    </location>
</feature>
<feature type="topological domain" description="Extracellular" evidence="6">
    <location>
        <begin position="1"/>
        <end position="63"/>
    </location>
</feature>
<feature type="transmembrane region" description="Helical; Name=1" evidence="1">
    <location>
        <begin position="64"/>
        <end position="84"/>
    </location>
</feature>
<feature type="topological domain" description="Cytoplasmic" evidence="6">
    <location>
        <begin position="85"/>
        <end position="97"/>
    </location>
</feature>
<feature type="transmembrane region" description="Helical; Name=2" evidence="1">
    <location>
        <begin position="98"/>
        <end position="118"/>
    </location>
</feature>
<feature type="topological domain" description="Extracellular" evidence="6">
    <location>
        <begin position="119"/>
        <end position="140"/>
    </location>
</feature>
<feature type="transmembrane region" description="Helical; Name=3" evidence="1">
    <location>
        <begin position="141"/>
        <end position="161"/>
    </location>
</feature>
<feature type="topological domain" description="Cytoplasmic" evidence="6">
    <location>
        <begin position="162"/>
        <end position="183"/>
    </location>
</feature>
<feature type="transmembrane region" description="Helical; Name=4" evidence="1">
    <location>
        <begin position="184"/>
        <end position="204"/>
    </location>
</feature>
<feature type="topological domain" description="Extracellular" evidence="6">
    <location>
        <begin position="205"/>
        <end position="251"/>
    </location>
</feature>
<feature type="transmembrane region" description="Helical; Name=5" evidence="1">
    <location>
        <begin position="252"/>
        <end position="272"/>
    </location>
</feature>
<feature type="topological domain" description="Cytoplasmic" evidence="6">
    <location>
        <begin position="273"/>
        <end position="301"/>
    </location>
</feature>
<feature type="transmembrane region" description="Helical; Name=6" evidence="1">
    <location>
        <begin position="302"/>
        <end position="322"/>
    </location>
</feature>
<feature type="topological domain" description="Extracellular" evidence="6">
    <location>
        <begin position="323"/>
        <end position="334"/>
    </location>
</feature>
<feature type="transmembrane region" description="Helical; Name=7" evidence="1">
    <location>
        <begin position="335"/>
        <end position="355"/>
    </location>
</feature>
<feature type="topological domain" description="Cytoplasmic" evidence="6">
    <location>
        <begin position="356"/>
        <end position="451"/>
    </location>
</feature>
<feature type="glycosylation site" description="N-linked (GlcNAc...) asparagine" evidence="2">
    <location>
        <position position="15"/>
    </location>
</feature>
<feature type="glycosylation site" description="N-linked (GlcNAc...) asparagine" evidence="2">
    <location>
        <position position="218"/>
    </location>
</feature>
<feature type="disulfide bond" evidence="3">
    <location>
        <begin position="134"/>
        <end position="225"/>
    </location>
</feature>
<organism evidence="7">
    <name type="scientific">Caenorhabditis elegans</name>
    <dbReference type="NCBI Taxonomy" id="6239"/>
    <lineage>
        <taxon>Eukaryota</taxon>
        <taxon>Metazoa</taxon>
        <taxon>Ecdysozoa</taxon>
        <taxon>Nematoda</taxon>
        <taxon>Chromadorea</taxon>
        <taxon>Rhabditida</taxon>
        <taxon>Rhabditina</taxon>
        <taxon>Rhabditomorpha</taxon>
        <taxon>Rhabditoidea</taxon>
        <taxon>Rhabditidae</taxon>
        <taxon>Peloderinae</taxon>
        <taxon>Caenorhabditis</taxon>
    </lineage>
</organism>
<accession>Q93704</accession>